<accession>Q9RPM6</accession>
<accession>Q7ALR5</accession>
<accession>Q7C5D1</accession>
<evidence type="ECO:0000250" key="1"/>
<evidence type="ECO:0000305" key="2"/>
<protein>
    <recommendedName>
        <fullName>Guanine nucleotide exchange factor SopE</fullName>
    </recommendedName>
    <alternativeName>
        <fullName>Effector protein SopE</fullName>
    </alternativeName>
    <alternativeName>
        <fullName>Toxin SopE</fullName>
    </alternativeName>
</protein>
<feature type="initiator methionine" description="Removed" evidence="1">
    <location>
        <position position="1"/>
    </location>
</feature>
<feature type="chain" id="PRO_0000220739" description="Guanine nucleotide exchange factor SopE">
    <location>
        <begin position="2"/>
        <end position="240"/>
    </location>
</feature>
<feature type="region of interest" description="GEF catalytic domain" evidence="1">
    <location>
        <begin position="78"/>
        <end position="240"/>
    </location>
</feature>
<keyword id="KW-0343">GTPase activation</keyword>
<keyword id="KW-0344">Guanine-nucleotide releasing factor</keyword>
<keyword id="KW-0964">Secreted</keyword>
<keyword id="KW-0843">Virulence</keyword>
<gene>
    <name type="primary">sopE</name>
    <name type="ordered locus">STY4609</name>
    <name type="ordered locus">t4303</name>
</gene>
<organism>
    <name type="scientific">Salmonella typhi</name>
    <dbReference type="NCBI Taxonomy" id="90370"/>
    <lineage>
        <taxon>Bacteria</taxon>
        <taxon>Pseudomonadati</taxon>
        <taxon>Pseudomonadota</taxon>
        <taxon>Gammaproteobacteria</taxon>
        <taxon>Enterobacterales</taxon>
        <taxon>Enterobacteriaceae</taxon>
        <taxon>Salmonella</taxon>
    </lineage>
</organism>
<sequence>MTKITLSPQNFRIQKQETTLLKEKSTEKNSLAKSILAVKNHFIELRSKLSERFISHKNTESSATHFHRGSASEGRAVLTNKVVKDFMLQTLNDIDIRGSASKDPAYASQTREAILSAVYSKNKDQCCNLLISKGINIAPFLQEIGEAAKNAGLPGTTKNDVFTPSGAGANPFITPLISSANSKYPRMFINQHQQASFKIYAEKIIMTEVAPLFNECAMPTPQQFQLILENIANKYIQYTP</sequence>
<dbReference type="EMBL" id="AF153829">
    <property type="protein sequence ID" value="AAD54239.1"/>
    <property type="molecule type" value="Genomic_DNA"/>
</dbReference>
<dbReference type="EMBL" id="AL513382">
    <property type="protein sequence ID" value="CAD06731.1"/>
    <property type="molecule type" value="Genomic_DNA"/>
</dbReference>
<dbReference type="EMBL" id="AE014613">
    <property type="protein sequence ID" value="AAO71759.1"/>
    <property type="molecule type" value="Genomic_DNA"/>
</dbReference>
<dbReference type="PIR" id="AF1035">
    <property type="entry name" value="AF1035"/>
</dbReference>
<dbReference type="RefSeq" id="NP_458691.1">
    <property type="nucleotide sequence ID" value="NC_003198.1"/>
</dbReference>
<dbReference type="RefSeq" id="WP_000161708.1">
    <property type="nucleotide sequence ID" value="NZ_WSUR01000075.1"/>
</dbReference>
<dbReference type="SMR" id="Q9RPM6"/>
<dbReference type="STRING" id="220341.gene:17588428"/>
<dbReference type="KEGG" id="stt:t4303"/>
<dbReference type="KEGG" id="sty:STY4609"/>
<dbReference type="PATRIC" id="fig|220341.7.peg.4707"/>
<dbReference type="eggNOG" id="ENOG5033HJR">
    <property type="taxonomic scope" value="Bacteria"/>
</dbReference>
<dbReference type="HOGENOM" id="CLU_107159_0_0_6"/>
<dbReference type="OMA" id="YATIYSE"/>
<dbReference type="OrthoDB" id="6561885at2"/>
<dbReference type="PHI-base" id="PHI:6799"/>
<dbReference type="Proteomes" id="UP000000541">
    <property type="component" value="Chromosome"/>
</dbReference>
<dbReference type="Proteomes" id="UP000002670">
    <property type="component" value="Chromosome"/>
</dbReference>
<dbReference type="GO" id="GO:0005576">
    <property type="term" value="C:extracellular region"/>
    <property type="evidence" value="ECO:0007669"/>
    <property type="project" value="UniProtKB-SubCell"/>
</dbReference>
<dbReference type="GO" id="GO:0005096">
    <property type="term" value="F:GTPase activator activity"/>
    <property type="evidence" value="ECO:0007669"/>
    <property type="project" value="UniProtKB-KW"/>
</dbReference>
<dbReference type="GO" id="GO:0005085">
    <property type="term" value="F:guanyl-nucleotide exchange factor activity"/>
    <property type="evidence" value="ECO:0007669"/>
    <property type="project" value="UniProtKB-KW"/>
</dbReference>
<dbReference type="GO" id="GO:0030036">
    <property type="term" value="P:actin cytoskeleton organization"/>
    <property type="evidence" value="ECO:0007669"/>
    <property type="project" value="InterPro"/>
</dbReference>
<dbReference type="Gene3D" id="1.10.4120.10">
    <property type="entry name" value="SopE-like, GEF domain"/>
    <property type="match status" value="1"/>
</dbReference>
<dbReference type="InterPro" id="IPR005414">
    <property type="entry name" value="SopE"/>
</dbReference>
<dbReference type="InterPro" id="IPR035949">
    <property type="entry name" value="SopE-like_GEF_dom_sf"/>
</dbReference>
<dbReference type="InterPro" id="IPR016019">
    <property type="entry name" value="SopE_GEF_dom"/>
</dbReference>
<dbReference type="InterPro" id="IPR016018">
    <property type="entry name" value="SopE_N_dom"/>
</dbReference>
<dbReference type="NCBIfam" id="NF011809">
    <property type="entry name" value="PRK15279.1"/>
    <property type="match status" value="1"/>
</dbReference>
<dbReference type="NCBIfam" id="NF011810">
    <property type="entry name" value="PRK15280.1"/>
    <property type="match status" value="1"/>
</dbReference>
<dbReference type="Pfam" id="PF05364">
    <property type="entry name" value="SecIII_SopE_N"/>
    <property type="match status" value="1"/>
</dbReference>
<dbReference type="Pfam" id="PF07487">
    <property type="entry name" value="SopE_GEF"/>
    <property type="match status" value="1"/>
</dbReference>
<dbReference type="PIRSF" id="PIRSF034781">
    <property type="entry name" value="SecIII_sopE"/>
    <property type="match status" value="1"/>
</dbReference>
<dbReference type="PRINTS" id="PR01593">
    <property type="entry name" value="SOPEPROTEIN"/>
</dbReference>
<dbReference type="SUPFAM" id="SSF81832">
    <property type="entry name" value="SopE-like GEF domain"/>
    <property type="match status" value="1"/>
</dbReference>
<comment type="function">
    <text evidence="1">Activator for both CDC42 and RAC1 by directly engaging these Rho GTPases and acting as potent guanine nucleotide exchange factor (GEF). This activation results in actin cytoskeleton rearrangements and stimulates membrane ruffling, promoting bacterial entry into non-phagocytic cells (By similarity).</text>
</comment>
<comment type="subcellular location">
    <subcellularLocation>
        <location>Secreted</location>
    </subcellularLocation>
    <text>Secreted via the type III secretion system 1 (SPI-1 T3SS).</text>
</comment>
<comment type="miscellaneous">
    <text>Encoded within a prophage region, which is only present in very few Salmonella isolates.</text>
</comment>
<comment type="similarity">
    <text evidence="2">Belongs to the GEF (guanine exchange factor) SopE family.</text>
</comment>
<reference key="1">
    <citation type="journal article" date="1999" name="Proc. Natl. Acad. Sci. U.S.A.">
        <title>Isolation of a temperate bacteriophage encoding the type III effector protein SopE from an epidemic Salmonella typhimurium strain.</title>
        <authorList>
            <person name="Mirold S."/>
            <person name="Rabsch W."/>
            <person name="Rohde M."/>
            <person name="Stender S."/>
            <person name="Tschaepe H."/>
            <person name="Ruessmann H."/>
            <person name="Igwe E."/>
            <person name="Hardt W.-D."/>
        </authorList>
    </citation>
    <scope>NUCLEOTIDE SEQUENCE [GENOMIC DNA]</scope>
    <scope>PROPHAGE-RELATED REGION</scope>
    <source>
        <strain>x3744</strain>
    </source>
</reference>
<reference key="2">
    <citation type="journal article" date="2001" name="Nature">
        <title>Complete genome sequence of a multiple drug resistant Salmonella enterica serovar Typhi CT18.</title>
        <authorList>
            <person name="Parkhill J."/>
            <person name="Dougan G."/>
            <person name="James K.D."/>
            <person name="Thomson N.R."/>
            <person name="Pickard D."/>
            <person name="Wain J."/>
            <person name="Churcher C.M."/>
            <person name="Mungall K.L."/>
            <person name="Bentley S.D."/>
            <person name="Holden M.T.G."/>
            <person name="Sebaihia M."/>
            <person name="Baker S."/>
            <person name="Basham D."/>
            <person name="Brooks K."/>
            <person name="Chillingworth T."/>
            <person name="Connerton P."/>
            <person name="Cronin A."/>
            <person name="Davis P."/>
            <person name="Davies R.M."/>
            <person name="Dowd L."/>
            <person name="White N."/>
            <person name="Farrar J."/>
            <person name="Feltwell T."/>
            <person name="Hamlin N."/>
            <person name="Haque A."/>
            <person name="Hien T.T."/>
            <person name="Holroyd S."/>
            <person name="Jagels K."/>
            <person name="Krogh A."/>
            <person name="Larsen T.S."/>
            <person name="Leather S."/>
            <person name="Moule S."/>
            <person name="O'Gaora P."/>
            <person name="Parry C."/>
            <person name="Quail M.A."/>
            <person name="Rutherford K.M."/>
            <person name="Simmonds M."/>
            <person name="Skelton J."/>
            <person name="Stevens K."/>
            <person name="Whitehead S."/>
            <person name="Barrell B.G."/>
        </authorList>
    </citation>
    <scope>NUCLEOTIDE SEQUENCE [LARGE SCALE GENOMIC DNA]</scope>
    <source>
        <strain>CT18</strain>
    </source>
</reference>
<reference key="3">
    <citation type="journal article" date="2003" name="J. Bacteriol.">
        <title>Comparative genomics of Salmonella enterica serovar Typhi strains Ty2 and CT18.</title>
        <authorList>
            <person name="Deng W."/>
            <person name="Liou S.-R."/>
            <person name="Plunkett G. III"/>
            <person name="Mayhew G.F."/>
            <person name="Rose D.J."/>
            <person name="Burland V."/>
            <person name="Kodoyianni V."/>
            <person name="Schwartz D.C."/>
            <person name="Blattner F.R."/>
        </authorList>
    </citation>
    <scope>NUCLEOTIDE SEQUENCE [LARGE SCALE GENOMIC DNA]</scope>
    <source>
        <strain>ATCC 700931 / Ty2</strain>
    </source>
</reference>
<proteinExistence type="inferred from homology"/>
<name>SOPE_SALTI</name>